<sequence length="304" mass="34478">MSTPDSTLVKAFLLDLQNRICNGLEALDGAAQFAEDSWKREEGGGGQSRVLTGGAVFEQAGVNFSHVMGASMPASATAHRPELAGRSFEAMGVSLVIHPKNPHIPTTHANVRFFIAHKEGADPVWWFGGGFDLTPYYPYLEDVVEWHQSAKSLCEPFGEEVYPKYKQWCDEYFWLPHRNETRGVGGLFFDDLNKQGFEQSFAFMQAVGNGFLTAYAPIVERRRDTEYGEHERQFQLYRRGRYVEFNLVYDRGTLFGLQTGGRTESILMSMPPLVRWEYAYTPEAGGPEAQLYSDYLKPRDWLNL</sequence>
<evidence type="ECO:0000255" key="1">
    <source>
        <dbReference type="HAMAP-Rule" id="MF_00333"/>
    </source>
</evidence>
<protein>
    <recommendedName>
        <fullName evidence="1">Oxygen-dependent coproporphyrinogen-III oxidase</fullName>
        <shortName evidence="1">CPO</shortName>
        <shortName evidence="1">Coprogen oxidase</shortName>
        <shortName evidence="1">Coproporphyrinogenase</shortName>
        <ecNumber evidence="1">1.3.3.3</ecNumber>
    </recommendedName>
</protein>
<gene>
    <name evidence="1" type="primary">hemF</name>
    <name type="ordered locus">Spea_0038</name>
</gene>
<keyword id="KW-0963">Cytoplasm</keyword>
<keyword id="KW-0350">Heme biosynthesis</keyword>
<keyword id="KW-0479">Metal-binding</keyword>
<keyword id="KW-0560">Oxidoreductase</keyword>
<keyword id="KW-0627">Porphyrin biosynthesis</keyword>
<keyword id="KW-1185">Reference proteome</keyword>
<accession>A8GYI0</accession>
<organism>
    <name type="scientific">Shewanella pealeana (strain ATCC 700345 / ANG-SQ1)</name>
    <dbReference type="NCBI Taxonomy" id="398579"/>
    <lineage>
        <taxon>Bacteria</taxon>
        <taxon>Pseudomonadati</taxon>
        <taxon>Pseudomonadota</taxon>
        <taxon>Gammaproteobacteria</taxon>
        <taxon>Alteromonadales</taxon>
        <taxon>Shewanellaceae</taxon>
        <taxon>Shewanella</taxon>
    </lineage>
</organism>
<proteinExistence type="inferred from homology"/>
<comment type="function">
    <text evidence="1">Involved in the heme biosynthesis. Catalyzes the aerobic oxidative decarboxylation of propionate groups of rings A and B of coproporphyrinogen-III to yield the vinyl groups in protoporphyrinogen-IX.</text>
</comment>
<comment type="catalytic activity">
    <reaction evidence="1">
        <text>coproporphyrinogen III + O2 + 2 H(+) = protoporphyrinogen IX + 2 CO2 + 2 H2O</text>
        <dbReference type="Rhea" id="RHEA:18257"/>
        <dbReference type="ChEBI" id="CHEBI:15377"/>
        <dbReference type="ChEBI" id="CHEBI:15378"/>
        <dbReference type="ChEBI" id="CHEBI:15379"/>
        <dbReference type="ChEBI" id="CHEBI:16526"/>
        <dbReference type="ChEBI" id="CHEBI:57307"/>
        <dbReference type="ChEBI" id="CHEBI:57309"/>
        <dbReference type="EC" id="1.3.3.3"/>
    </reaction>
</comment>
<comment type="cofactor">
    <cofactor evidence="1">
        <name>a divalent metal cation</name>
        <dbReference type="ChEBI" id="CHEBI:60240"/>
    </cofactor>
</comment>
<comment type="pathway">
    <text evidence="1">Porphyrin-containing compound metabolism; protoporphyrin-IX biosynthesis; protoporphyrinogen-IX from coproporphyrinogen-III (O2 route): step 1/1.</text>
</comment>
<comment type="subunit">
    <text evidence="1">Homodimer.</text>
</comment>
<comment type="subcellular location">
    <subcellularLocation>
        <location evidence="1">Cytoplasm</location>
    </subcellularLocation>
</comment>
<comment type="similarity">
    <text evidence="1">Belongs to the aerobic coproporphyrinogen-III oxidase family.</text>
</comment>
<name>HEM6_SHEPA</name>
<feature type="chain" id="PRO_1000079263" description="Oxygen-dependent coproporphyrinogen-III oxidase">
    <location>
        <begin position="1"/>
        <end position="304"/>
    </location>
</feature>
<feature type="region of interest" description="Important for dimerization" evidence="1">
    <location>
        <begin position="242"/>
        <end position="277"/>
    </location>
</feature>
<feature type="active site" description="Proton donor" evidence="1">
    <location>
        <position position="108"/>
    </location>
</feature>
<feature type="binding site" evidence="1">
    <location>
        <position position="94"/>
    </location>
    <ligand>
        <name>substrate</name>
    </ligand>
</feature>
<feature type="binding site" evidence="1">
    <location>
        <position position="98"/>
    </location>
    <ligand>
        <name>a divalent metal cation</name>
        <dbReference type="ChEBI" id="CHEBI:60240"/>
    </ligand>
</feature>
<feature type="binding site" evidence="1">
    <location>
        <position position="108"/>
    </location>
    <ligand>
        <name>a divalent metal cation</name>
        <dbReference type="ChEBI" id="CHEBI:60240"/>
    </ligand>
</feature>
<feature type="binding site" evidence="1">
    <location>
        <begin position="110"/>
        <end position="112"/>
    </location>
    <ligand>
        <name>substrate</name>
    </ligand>
</feature>
<feature type="binding site" evidence="1">
    <location>
        <position position="147"/>
    </location>
    <ligand>
        <name>a divalent metal cation</name>
        <dbReference type="ChEBI" id="CHEBI:60240"/>
    </ligand>
</feature>
<feature type="binding site" evidence="1">
    <location>
        <position position="177"/>
    </location>
    <ligand>
        <name>a divalent metal cation</name>
        <dbReference type="ChEBI" id="CHEBI:60240"/>
    </ligand>
</feature>
<feature type="binding site" evidence="1">
    <location>
        <begin position="260"/>
        <end position="262"/>
    </location>
    <ligand>
        <name>substrate</name>
    </ligand>
</feature>
<feature type="site" description="Important for dimerization" evidence="1">
    <location>
        <position position="177"/>
    </location>
</feature>
<reference key="1">
    <citation type="submission" date="2007-10" db="EMBL/GenBank/DDBJ databases">
        <title>Complete sequence of Shewanella pealeana ATCC 700345.</title>
        <authorList>
            <consortium name="US DOE Joint Genome Institute"/>
            <person name="Copeland A."/>
            <person name="Lucas S."/>
            <person name="Lapidus A."/>
            <person name="Barry K."/>
            <person name="Glavina del Rio T."/>
            <person name="Dalin E."/>
            <person name="Tice H."/>
            <person name="Pitluck S."/>
            <person name="Chertkov O."/>
            <person name="Brettin T."/>
            <person name="Bruce D."/>
            <person name="Detter J.C."/>
            <person name="Han C."/>
            <person name="Schmutz J."/>
            <person name="Larimer F."/>
            <person name="Land M."/>
            <person name="Hauser L."/>
            <person name="Kyrpides N."/>
            <person name="Kim E."/>
            <person name="Zhao J.-S.Z."/>
            <person name="Manno D."/>
            <person name="Hawari J."/>
            <person name="Richardson P."/>
        </authorList>
    </citation>
    <scope>NUCLEOTIDE SEQUENCE [LARGE SCALE GENOMIC DNA]</scope>
    <source>
        <strain>ATCC 700345 / ANG-SQ1</strain>
    </source>
</reference>
<dbReference type="EC" id="1.3.3.3" evidence="1"/>
<dbReference type="EMBL" id="CP000851">
    <property type="protein sequence ID" value="ABV85367.1"/>
    <property type="molecule type" value="Genomic_DNA"/>
</dbReference>
<dbReference type="RefSeq" id="WP_012153313.1">
    <property type="nucleotide sequence ID" value="NC_009901.1"/>
</dbReference>
<dbReference type="SMR" id="A8GYI0"/>
<dbReference type="STRING" id="398579.Spea_0038"/>
<dbReference type="KEGG" id="spl:Spea_0038"/>
<dbReference type="eggNOG" id="COG0408">
    <property type="taxonomic scope" value="Bacteria"/>
</dbReference>
<dbReference type="HOGENOM" id="CLU_026169_0_1_6"/>
<dbReference type="OrthoDB" id="9777553at2"/>
<dbReference type="UniPathway" id="UPA00251">
    <property type="reaction ID" value="UER00322"/>
</dbReference>
<dbReference type="Proteomes" id="UP000002608">
    <property type="component" value="Chromosome"/>
</dbReference>
<dbReference type="GO" id="GO:0005737">
    <property type="term" value="C:cytoplasm"/>
    <property type="evidence" value="ECO:0007669"/>
    <property type="project" value="UniProtKB-SubCell"/>
</dbReference>
<dbReference type="GO" id="GO:0004109">
    <property type="term" value="F:coproporphyrinogen oxidase activity"/>
    <property type="evidence" value="ECO:0007669"/>
    <property type="project" value="UniProtKB-UniRule"/>
</dbReference>
<dbReference type="GO" id="GO:0046872">
    <property type="term" value="F:metal ion binding"/>
    <property type="evidence" value="ECO:0007669"/>
    <property type="project" value="UniProtKB-KW"/>
</dbReference>
<dbReference type="GO" id="GO:0042803">
    <property type="term" value="F:protein homodimerization activity"/>
    <property type="evidence" value="ECO:0000250"/>
    <property type="project" value="UniProtKB"/>
</dbReference>
<dbReference type="GO" id="GO:0006782">
    <property type="term" value="P:protoporphyrinogen IX biosynthetic process"/>
    <property type="evidence" value="ECO:0007669"/>
    <property type="project" value="UniProtKB-UniRule"/>
</dbReference>
<dbReference type="FunFam" id="3.40.1500.10:FF:000001">
    <property type="entry name" value="Oxygen-dependent coproporphyrinogen-III oxidase"/>
    <property type="match status" value="1"/>
</dbReference>
<dbReference type="Gene3D" id="3.40.1500.10">
    <property type="entry name" value="Coproporphyrinogen III oxidase, aerobic"/>
    <property type="match status" value="1"/>
</dbReference>
<dbReference type="HAMAP" id="MF_00333">
    <property type="entry name" value="Coprogen_oxidas"/>
    <property type="match status" value="1"/>
</dbReference>
<dbReference type="InterPro" id="IPR001260">
    <property type="entry name" value="Coprogen_oxidase_aer"/>
</dbReference>
<dbReference type="InterPro" id="IPR036406">
    <property type="entry name" value="Coprogen_oxidase_aer_sf"/>
</dbReference>
<dbReference type="InterPro" id="IPR018375">
    <property type="entry name" value="Coprogen_oxidase_CS"/>
</dbReference>
<dbReference type="NCBIfam" id="NF003727">
    <property type="entry name" value="PRK05330.1"/>
    <property type="match status" value="1"/>
</dbReference>
<dbReference type="PANTHER" id="PTHR10755">
    <property type="entry name" value="COPROPORPHYRINOGEN III OXIDASE, MITOCHONDRIAL"/>
    <property type="match status" value="1"/>
</dbReference>
<dbReference type="PANTHER" id="PTHR10755:SF0">
    <property type="entry name" value="OXYGEN-DEPENDENT COPROPORPHYRINOGEN-III OXIDASE, MITOCHONDRIAL"/>
    <property type="match status" value="1"/>
</dbReference>
<dbReference type="Pfam" id="PF01218">
    <property type="entry name" value="Coprogen_oxidas"/>
    <property type="match status" value="1"/>
</dbReference>
<dbReference type="PIRSF" id="PIRSF000166">
    <property type="entry name" value="Coproporphyri_ox"/>
    <property type="match status" value="1"/>
</dbReference>
<dbReference type="PRINTS" id="PR00073">
    <property type="entry name" value="COPRGNOXDASE"/>
</dbReference>
<dbReference type="SUPFAM" id="SSF102886">
    <property type="entry name" value="Coproporphyrinogen III oxidase"/>
    <property type="match status" value="1"/>
</dbReference>
<dbReference type="PROSITE" id="PS01021">
    <property type="entry name" value="COPROGEN_OXIDASE"/>
    <property type="match status" value="1"/>
</dbReference>